<reference key="1">
    <citation type="submission" date="2000-11" db="EMBL/GenBank/DDBJ databases">
        <title>Cloning, expression and purification of the acidic ribosomal protein from Candida albicans.</title>
        <authorList>
            <person name="Abramczyk D."/>
            <person name="Tchorzewski M."/>
            <person name="Grankowski N."/>
        </authorList>
    </citation>
    <scope>NUCLEOTIDE SEQUENCE [GENOMIC DNA]</scope>
    <source>
        <strain>ATCC 10321 / CCM 8215</strain>
    </source>
</reference>
<reference key="2">
    <citation type="submission" date="1998-11" db="EMBL/GenBank/DDBJ databases">
        <title>Candida albicans strain 1161 genome pilot sequencing project.</title>
        <authorList>
            <person name="Taylor K."/>
            <person name="Harris D."/>
            <person name="Barrell B.G."/>
            <person name="Rajandream M.A."/>
        </authorList>
    </citation>
    <scope>NUCLEOTIDE SEQUENCE [LARGE SCALE GENOMIC DNA]</scope>
    <source>
        <strain>1161</strain>
    </source>
</reference>
<reference key="3">
    <citation type="journal article" date="2004" name="Proc. Natl. Acad. Sci. U.S.A.">
        <title>The diploid genome sequence of Candida albicans.</title>
        <authorList>
            <person name="Jones T."/>
            <person name="Federspiel N.A."/>
            <person name="Chibana H."/>
            <person name="Dungan J."/>
            <person name="Kalman S."/>
            <person name="Magee B.B."/>
            <person name="Newport G."/>
            <person name="Thorstenson Y.R."/>
            <person name="Agabian N."/>
            <person name="Magee P.T."/>
            <person name="Davis R.W."/>
            <person name="Scherer S."/>
        </authorList>
    </citation>
    <scope>NUCLEOTIDE SEQUENCE [LARGE SCALE GENOMIC DNA]</scope>
    <source>
        <strain>SC5314 / ATCC MYA-2876</strain>
    </source>
</reference>
<reference key="4">
    <citation type="journal article" date="2007" name="Genome Biol.">
        <title>Assembly of the Candida albicans genome into sixteen supercontigs aligned on the eight chromosomes.</title>
        <authorList>
            <person name="van het Hoog M."/>
            <person name="Rast T.J."/>
            <person name="Martchenko M."/>
            <person name="Grindle S."/>
            <person name="Dignard D."/>
            <person name="Hogues H."/>
            <person name="Cuomo C."/>
            <person name="Berriman M."/>
            <person name="Scherer S."/>
            <person name="Magee B.B."/>
            <person name="Whiteway M."/>
            <person name="Chibana H."/>
            <person name="Nantel A."/>
            <person name="Magee P.T."/>
        </authorList>
    </citation>
    <scope>GENOME REANNOTATION</scope>
    <source>
        <strain>SC5314 / ATCC MYA-2876</strain>
    </source>
</reference>
<reference key="5">
    <citation type="journal article" date="2013" name="Genome Biol.">
        <title>Assembly of a phased diploid Candida albicans genome facilitates allele-specific measurements and provides a simple model for repeat and indel structure.</title>
        <authorList>
            <person name="Muzzey D."/>
            <person name="Schwartz K."/>
            <person name="Weissman J.S."/>
            <person name="Sherlock G."/>
        </authorList>
    </citation>
    <scope>NUCLEOTIDE SEQUENCE [LARGE SCALE GENOMIC DNA]</scope>
    <scope>GENOME REANNOTATION</scope>
    <source>
        <strain>SC5314 / ATCC MYA-2876</strain>
    </source>
</reference>
<dbReference type="EMBL" id="AF317659">
    <property type="protein sequence ID" value="AAG33240.1"/>
    <property type="molecule type" value="Genomic_DNA"/>
</dbReference>
<dbReference type="EMBL" id="AL033497">
    <property type="protein sequence ID" value="CAA21967.1"/>
    <property type="molecule type" value="Genomic_DNA"/>
</dbReference>
<dbReference type="EMBL" id="CP017623">
    <property type="protein sequence ID" value="AOW25982.1"/>
    <property type="molecule type" value="Genomic_DNA"/>
</dbReference>
<dbReference type="PIR" id="T52147">
    <property type="entry name" value="T52147"/>
</dbReference>
<dbReference type="RefSeq" id="XP_721490.1">
    <property type="nucleotide sequence ID" value="XM_716397.1"/>
</dbReference>
<dbReference type="SMR" id="Q9HFQ7"/>
<dbReference type="BioGRID" id="1219933">
    <property type="interactions" value="3"/>
</dbReference>
<dbReference type="FunCoup" id="Q9HFQ7">
    <property type="interactions" value="821"/>
</dbReference>
<dbReference type="STRING" id="237561.Q9HFQ7"/>
<dbReference type="EnsemblFungi" id="C1_03010W_A-T">
    <property type="protein sequence ID" value="C1_03010W_A-T-p1"/>
    <property type="gene ID" value="C1_03010W_A"/>
</dbReference>
<dbReference type="GeneID" id="3636839"/>
<dbReference type="KEGG" id="cal:CAALFM_C103010WA"/>
<dbReference type="CGD" id="CAL0000178222">
    <property type="gene designation" value="RPP1A"/>
</dbReference>
<dbReference type="VEuPathDB" id="FungiDB:C1_03010W_A"/>
<dbReference type="HOGENOM" id="CLU_114656_1_0_1"/>
<dbReference type="InParanoid" id="Q9HFQ7"/>
<dbReference type="OMA" id="YSAHDHE"/>
<dbReference type="OrthoDB" id="2194681at2759"/>
<dbReference type="PRO" id="PR:Q9HFQ7"/>
<dbReference type="Proteomes" id="UP000000559">
    <property type="component" value="Chromosome 1"/>
</dbReference>
<dbReference type="GO" id="GO:0022625">
    <property type="term" value="C:cytosolic large ribosomal subunit"/>
    <property type="evidence" value="ECO:0000318"/>
    <property type="project" value="GO_Central"/>
</dbReference>
<dbReference type="GO" id="GO:0005840">
    <property type="term" value="C:ribosome"/>
    <property type="evidence" value="ECO:0000314"/>
    <property type="project" value="CGD"/>
</dbReference>
<dbReference type="GO" id="GO:0030295">
    <property type="term" value="F:protein kinase activator activity"/>
    <property type="evidence" value="ECO:0000318"/>
    <property type="project" value="GO_Central"/>
</dbReference>
<dbReference type="GO" id="GO:0043021">
    <property type="term" value="F:ribonucleoprotein complex binding"/>
    <property type="evidence" value="ECO:0000318"/>
    <property type="project" value="GO_Central"/>
</dbReference>
<dbReference type="GO" id="GO:0003735">
    <property type="term" value="F:structural constituent of ribosome"/>
    <property type="evidence" value="ECO:0000314"/>
    <property type="project" value="CGD"/>
</dbReference>
<dbReference type="GO" id="GO:0002181">
    <property type="term" value="P:cytoplasmic translation"/>
    <property type="evidence" value="ECO:0000318"/>
    <property type="project" value="GO_Central"/>
</dbReference>
<dbReference type="GO" id="GO:0006412">
    <property type="term" value="P:translation"/>
    <property type="evidence" value="ECO:0000250"/>
    <property type="project" value="CGD"/>
</dbReference>
<dbReference type="GO" id="GO:0006414">
    <property type="term" value="P:translational elongation"/>
    <property type="evidence" value="ECO:0007669"/>
    <property type="project" value="InterPro"/>
</dbReference>
<dbReference type="CDD" id="cd05831">
    <property type="entry name" value="Ribosomal_P1"/>
    <property type="match status" value="1"/>
</dbReference>
<dbReference type="FunFam" id="1.10.10.1410:FF:000002">
    <property type="entry name" value="60S acidic ribosomal protein P2"/>
    <property type="match status" value="1"/>
</dbReference>
<dbReference type="Gene3D" id="1.10.10.1410">
    <property type="match status" value="1"/>
</dbReference>
<dbReference type="HAMAP" id="MF_01478">
    <property type="entry name" value="Ribosomal_L12_arch"/>
    <property type="match status" value="1"/>
</dbReference>
<dbReference type="InterPro" id="IPR038716">
    <property type="entry name" value="P1/P2_N_sf"/>
</dbReference>
<dbReference type="InterPro" id="IPR027534">
    <property type="entry name" value="Ribosomal_P1/P2"/>
</dbReference>
<dbReference type="PANTHER" id="PTHR45696">
    <property type="entry name" value="60S ACIDIC RIBOSOMAL PROTEIN P1"/>
    <property type="match status" value="1"/>
</dbReference>
<dbReference type="PANTHER" id="PTHR45696:SF10">
    <property type="entry name" value="LARGE RIBOSOMAL SUBUNIT PROTEIN P1"/>
    <property type="match status" value="1"/>
</dbReference>
<dbReference type="Pfam" id="PF00428">
    <property type="entry name" value="Ribosomal_60s"/>
    <property type="match status" value="1"/>
</dbReference>
<feature type="chain" id="PRO_0000157703" description="Large ribosomal subunit protein P1A">
    <location>
        <begin position="1"/>
        <end position="106"/>
    </location>
</feature>
<feature type="region of interest" description="Disordered" evidence="3">
    <location>
        <begin position="74"/>
        <end position="106"/>
    </location>
</feature>
<feature type="compositionally biased region" description="Acidic residues" evidence="3">
    <location>
        <begin position="82"/>
        <end position="100"/>
    </location>
</feature>
<feature type="sequence conflict" description="In Ref. 2; CAA21967." evidence="4" ref="2">
    <original>G</original>
    <variation>A</variation>
    <location>
        <position position="75"/>
    </location>
</feature>
<protein>
    <recommendedName>
        <fullName evidence="2">Large ribosomal subunit protein P1A</fullName>
    </recommendedName>
    <alternativeName>
        <fullName>60S acidic ribosomal protein P1-A</fullName>
        <shortName>CaRP1A</shortName>
    </alternativeName>
</protein>
<organism>
    <name type="scientific">Candida albicans (strain SC5314 / ATCC MYA-2876)</name>
    <name type="common">Yeast</name>
    <dbReference type="NCBI Taxonomy" id="237561"/>
    <lineage>
        <taxon>Eukaryota</taxon>
        <taxon>Fungi</taxon>
        <taxon>Dikarya</taxon>
        <taxon>Ascomycota</taxon>
        <taxon>Saccharomycotina</taxon>
        <taxon>Pichiomycetes</taxon>
        <taxon>Debaryomycetaceae</taxon>
        <taxon>Candida/Lodderomyces clade</taxon>
        <taxon>Candida</taxon>
    </lineage>
</organism>
<evidence type="ECO:0000250" key="1"/>
<evidence type="ECO:0000250" key="2">
    <source>
        <dbReference type="UniProtKB" id="P05318"/>
    </source>
</evidence>
<evidence type="ECO:0000256" key="3">
    <source>
        <dbReference type="SAM" id="MobiDB-lite"/>
    </source>
</evidence>
<evidence type="ECO:0000305" key="4"/>
<accession>Q9HFQ7</accession>
<accession>A0A1D8PCW4</accession>
<accession>O94018</accession>
<accession>Q5AI60</accession>
<proteinExistence type="inferred from homology"/>
<name>RLA1_CANAL</name>
<gene>
    <name type="primary">RPP1A</name>
    <name type="ordered locus">CAALFM_C103010WA</name>
    <name type="ORF">Ca49C10.02c</name>
    <name type="ORF">CaO19.10509</name>
    <name type="ORF">CaO19.2992</name>
</gene>
<comment type="function">
    <text evidence="2">Component of the ribosome, a large ribonucleoprotein complex responsible for the synthesis of proteins in the cell. The small ribosomal subunit (SSU) binds messenger RNAs (mRNAs) and translates the encoded message by selecting cognate aminoacyl-transfer RNA (tRNA) molecules. The large subunit (LSU) contains the ribosomal catalytic site termed the peptidyl transferase center (PTC), which catalyzes the formation of peptide bonds, thereby polymerizing the amino acids delivered by tRNAs into a polypeptide chain. The nascent polypeptides leave the ribosome through a tunnel in the LSU and interact with protein factors that function in enzymatic processing, targeting, and the membrane insertion of nascent chains at the exit of the ribosomal tunnel.</text>
</comment>
<comment type="subunit">
    <text evidence="2 4">Component of the large ribosomal subunit (LSU) (By similarity). Mature ribosomes consist of a small (40S) and a large (60S) subunit. The 40S subunit contains about 32 different proteins and 1 molecule of RNA (18S). The 60S subunit contains 45 different proteins and 3 molecules of RNA (25S, 5.8S and 5S) (Probable). The 5 acidic ribosomal P-proteins form the stalk structure of the 60S subunit. They are organized as a pentameric complex in which uL10/P0 interacts with 2 heterodimers, P1A-P2B and P1B-P2A (By similarity).</text>
</comment>
<comment type="subcellular location">
    <subcellularLocation>
        <location evidence="2">Cytoplasm</location>
    </subcellularLocation>
</comment>
<comment type="PTM">
    <text evidence="1">Phosphorylated.</text>
</comment>
<comment type="similarity">
    <text evidence="4">Belongs to the eukaryotic ribosomal protein P1/P2 family.</text>
</comment>
<sequence>MSTESALSYAALILADAEVEITSEKLLALVTKANVEVEGIWADLFAKALEGKDLKEFFFNFSAAPAAAAAGGAAGGGAAAEEAAEEEKEEEAKEESDDDMGFGLFD</sequence>
<keyword id="KW-0963">Cytoplasm</keyword>
<keyword id="KW-1185">Reference proteome</keyword>
<keyword id="KW-0687">Ribonucleoprotein</keyword>
<keyword id="KW-0689">Ribosomal protein</keyword>